<organism>
    <name type="scientific">Haemophilus ducreyi (strain 35000HP / ATCC 700724)</name>
    <dbReference type="NCBI Taxonomy" id="233412"/>
    <lineage>
        <taxon>Bacteria</taxon>
        <taxon>Pseudomonadati</taxon>
        <taxon>Pseudomonadota</taxon>
        <taxon>Gammaproteobacteria</taxon>
        <taxon>Pasteurellales</taxon>
        <taxon>Pasteurellaceae</taxon>
        <taxon>Haemophilus</taxon>
    </lineage>
</organism>
<dbReference type="EC" id="5.4.99.23" evidence="2"/>
<dbReference type="EMBL" id="AE017143">
    <property type="protein sequence ID" value="AAP95428.1"/>
    <property type="molecule type" value="Genomic_DNA"/>
</dbReference>
<dbReference type="EMBL" id="AF224466">
    <property type="protein sequence ID" value="AAF32394.1"/>
    <property type="molecule type" value="Genomic_DNA"/>
</dbReference>
<dbReference type="RefSeq" id="WP_010944481.1">
    <property type="nucleotide sequence ID" value="NC_002940.2"/>
</dbReference>
<dbReference type="SMR" id="Q9L7A7"/>
<dbReference type="STRING" id="233412.HD_0469"/>
<dbReference type="KEGG" id="hdu:HD_0469"/>
<dbReference type="eggNOG" id="COG0564">
    <property type="taxonomic scope" value="Bacteria"/>
</dbReference>
<dbReference type="HOGENOM" id="CLU_016902_4_0_6"/>
<dbReference type="OrthoDB" id="9807829at2"/>
<dbReference type="Proteomes" id="UP000001022">
    <property type="component" value="Chromosome"/>
</dbReference>
<dbReference type="GO" id="GO:0005737">
    <property type="term" value="C:cytoplasm"/>
    <property type="evidence" value="ECO:0007669"/>
    <property type="project" value="UniProtKB-SubCell"/>
</dbReference>
<dbReference type="GO" id="GO:0160140">
    <property type="term" value="F:23S rRNA pseudouridine(1911/1915/1917) synthase activity"/>
    <property type="evidence" value="ECO:0007669"/>
    <property type="project" value="UniProtKB-EC"/>
</dbReference>
<dbReference type="GO" id="GO:0003723">
    <property type="term" value="F:RNA binding"/>
    <property type="evidence" value="ECO:0007669"/>
    <property type="project" value="UniProtKB-KW"/>
</dbReference>
<dbReference type="GO" id="GO:0000455">
    <property type="term" value="P:enzyme-directed rRNA pseudouridine synthesis"/>
    <property type="evidence" value="ECO:0007669"/>
    <property type="project" value="UniProtKB-ARBA"/>
</dbReference>
<dbReference type="CDD" id="cd02869">
    <property type="entry name" value="PseudoU_synth_RluA_like"/>
    <property type="match status" value="1"/>
</dbReference>
<dbReference type="CDD" id="cd00165">
    <property type="entry name" value="S4"/>
    <property type="match status" value="1"/>
</dbReference>
<dbReference type="FunFam" id="3.10.290.10:FF:000011">
    <property type="entry name" value="Pseudouridine synthase"/>
    <property type="match status" value="1"/>
</dbReference>
<dbReference type="FunFam" id="3.30.2350.10:FF:000006">
    <property type="entry name" value="Pseudouridine synthase"/>
    <property type="match status" value="1"/>
</dbReference>
<dbReference type="Gene3D" id="3.30.2350.10">
    <property type="entry name" value="Pseudouridine synthase"/>
    <property type="match status" value="1"/>
</dbReference>
<dbReference type="Gene3D" id="3.10.290.10">
    <property type="entry name" value="RNA-binding S4 domain"/>
    <property type="match status" value="1"/>
</dbReference>
<dbReference type="InterPro" id="IPR020103">
    <property type="entry name" value="PsdUridine_synth_cat_dom_sf"/>
</dbReference>
<dbReference type="InterPro" id="IPR006224">
    <property type="entry name" value="PsdUridine_synth_RluA-like_CS"/>
</dbReference>
<dbReference type="InterPro" id="IPR006225">
    <property type="entry name" value="PsdUridine_synth_RluC/D"/>
</dbReference>
<dbReference type="InterPro" id="IPR006145">
    <property type="entry name" value="PsdUridine_synth_RsuA/RluA"/>
</dbReference>
<dbReference type="InterPro" id="IPR050188">
    <property type="entry name" value="RluA_PseudoU_synthase"/>
</dbReference>
<dbReference type="InterPro" id="IPR002942">
    <property type="entry name" value="S4_RNA-bd"/>
</dbReference>
<dbReference type="InterPro" id="IPR036986">
    <property type="entry name" value="S4_RNA-bd_sf"/>
</dbReference>
<dbReference type="NCBIfam" id="NF008385">
    <property type="entry name" value="PRK11180.1"/>
    <property type="match status" value="1"/>
</dbReference>
<dbReference type="NCBIfam" id="TIGR00005">
    <property type="entry name" value="rluA_subfam"/>
    <property type="match status" value="1"/>
</dbReference>
<dbReference type="PANTHER" id="PTHR21600">
    <property type="entry name" value="MITOCHONDRIAL RNA PSEUDOURIDINE SYNTHASE"/>
    <property type="match status" value="1"/>
</dbReference>
<dbReference type="PANTHER" id="PTHR21600:SF44">
    <property type="entry name" value="RIBOSOMAL LARGE SUBUNIT PSEUDOURIDINE SYNTHASE D"/>
    <property type="match status" value="1"/>
</dbReference>
<dbReference type="Pfam" id="PF00849">
    <property type="entry name" value="PseudoU_synth_2"/>
    <property type="match status" value="1"/>
</dbReference>
<dbReference type="Pfam" id="PF01479">
    <property type="entry name" value="S4"/>
    <property type="match status" value="1"/>
</dbReference>
<dbReference type="SMART" id="SM00363">
    <property type="entry name" value="S4"/>
    <property type="match status" value="1"/>
</dbReference>
<dbReference type="SUPFAM" id="SSF55174">
    <property type="entry name" value="Alpha-L RNA-binding motif"/>
    <property type="match status" value="1"/>
</dbReference>
<dbReference type="SUPFAM" id="SSF55120">
    <property type="entry name" value="Pseudouridine synthase"/>
    <property type="match status" value="1"/>
</dbReference>
<dbReference type="PROSITE" id="PS01129">
    <property type="entry name" value="PSI_RLU"/>
    <property type="match status" value="1"/>
</dbReference>
<dbReference type="PROSITE" id="PS50889">
    <property type="entry name" value="S4"/>
    <property type="match status" value="1"/>
</dbReference>
<gene>
    <name type="primary">rluD</name>
    <name type="ordered locus">HD_0469</name>
</gene>
<sequence length="325" mass="36991">MTQQMTLTAEISADLLGYRLDQALAQLFPDYSRSRIKVWIENDLVKVNGIIVNRARGKVFGGEQIEIQAEIEEEIRFEPQNIPLNIVHEDDDIIIINKPKNLVVHPGAGNPDGTVLNALLYYYPPIAEVPRAGIIHRLDKDTTGLMVVAKNIPAQTHLVTALQKRRITREYEAIASGIMTQGGKVDEPMARHPTKRTAMAVHPMGKPAITHYRIMERFRNYTRLRLRLETGRTHQIRVHMAHIAHPLLGDQLYGGRPRPPKGSSEAFLTVLRAFQRQALHATMLRLEHPINGELIECHAPLPADFVELIEALKTDYQRYKEDLYY</sequence>
<keyword id="KW-0963">Cytoplasm</keyword>
<keyword id="KW-0413">Isomerase</keyword>
<keyword id="KW-1185">Reference proteome</keyword>
<keyword id="KW-0694">RNA-binding</keyword>
<keyword id="KW-0698">rRNA processing</keyword>
<proteinExistence type="inferred from homology"/>
<accession>Q9L7A7</accession>
<feature type="chain" id="PRO_0000162691" description="Ribosomal large subunit pseudouridine synthase D">
    <location>
        <begin position="1"/>
        <end position="325"/>
    </location>
</feature>
<feature type="domain" description="S4 RNA-binding" evidence="3">
    <location>
        <begin position="18"/>
        <end position="78"/>
    </location>
</feature>
<feature type="active site" evidence="1">
    <location>
        <position position="139"/>
    </location>
</feature>
<evidence type="ECO:0000250" key="1"/>
<evidence type="ECO:0000250" key="2">
    <source>
        <dbReference type="UniProtKB" id="P33643"/>
    </source>
</evidence>
<evidence type="ECO:0000255" key="3">
    <source>
        <dbReference type="PROSITE-ProRule" id="PRU00182"/>
    </source>
</evidence>
<evidence type="ECO:0000305" key="4"/>
<reference key="1">
    <citation type="submission" date="2003-06" db="EMBL/GenBank/DDBJ databases">
        <title>The complete genome sequence of Haemophilus ducreyi.</title>
        <authorList>
            <person name="Munson R.S. Jr."/>
            <person name="Ray W.C."/>
            <person name="Mahairas G."/>
            <person name="Sabo P."/>
            <person name="Mungur R."/>
            <person name="Johnson L."/>
            <person name="Nguyen D."/>
            <person name="Wang J."/>
            <person name="Forst C."/>
            <person name="Hood L."/>
        </authorList>
    </citation>
    <scope>NUCLEOTIDE SEQUENCE [LARGE SCALE GENOMIC DNA]</scope>
    <source>
        <strain>35000HP / ATCC 700724</strain>
    </source>
</reference>
<reference key="2">
    <citation type="journal article" date="2000" name="J. Bacteriol.">
        <title>Cloning and characterization of the lipooligosaccharide galactosyltransferase II gene of Haemophilus ducreyi.</title>
        <authorList>
            <person name="Sun S."/>
            <person name="Schilling B."/>
            <person name="Tarantino L."/>
            <person name="Tullius M.V."/>
            <person name="Gibson B.W."/>
            <person name="Munson R.S. Jr."/>
        </authorList>
    </citation>
    <scope>NUCLEOTIDE SEQUENCE [GENOMIC DNA] OF 1-250</scope>
    <source>
        <strain>35000HP / ATCC 700724</strain>
    </source>
</reference>
<protein>
    <recommendedName>
        <fullName evidence="2">Ribosomal large subunit pseudouridine synthase D</fullName>
        <ecNumber evidence="2">5.4.99.23</ecNumber>
    </recommendedName>
    <alternativeName>
        <fullName>23S rRNA pseudouridine(1911/1915/1917) synthase</fullName>
    </alternativeName>
    <alternativeName>
        <fullName>rRNA pseudouridylate synthase D</fullName>
    </alternativeName>
    <alternativeName>
        <fullName>rRNA-uridine isomerase D</fullName>
    </alternativeName>
</protein>
<comment type="function">
    <text evidence="2">Responsible for synthesis of pseudouridine from uracil at positions 1911, 1915 and 1917 in 23S ribosomal RNA.</text>
</comment>
<comment type="catalytic activity">
    <reaction evidence="2">
        <text>uridine(1911/1915/1917) in 23S rRNA = pseudouridine(1911/1915/1917) in 23S rRNA</text>
        <dbReference type="Rhea" id="RHEA:42524"/>
        <dbReference type="Rhea" id="RHEA-COMP:10097"/>
        <dbReference type="Rhea" id="RHEA-COMP:10098"/>
        <dbReference type="ChEBI" id="CHEBI:65314"/>
        <dbReference type="ChEBI" id="CHEBI:65315"/>
        <dbReference type="EC" id="5.4.99.23"/>
    </reaction>
</comment>
<comment type="subcellular location">
    <subcellularLocation>
        <location evidence="2">Cytoplasm</location>
    </subcellularLocation>
    <text evidence="2">Associates with late stage pre-50S ribosomal subunits.</text>
</comment>
<comment type="similarity">
    <text evidence="4">Belongs to the pseudouridine synthase RluA family.</text>
</comment>
<name>RLUD_HAEDU</name>